<feature type="chain" id="PRO_0000144104" description="Kappa-casein">
    <location>
        <begin position="1" status="less than"/>
        <end position="123"/>
    </location>
</feature>
<feature type="region of interest" description="Disordered" evidence="4">
    <location>
        <begin position="100"/>
        <end position="123"/>
    </location>
</feature>
<feature type="compositionally biased region" description="Polar residues" evidence="4">
    <location>
        <begin position="103"/>
        <end position="123"/>
    </location>
</feature>
<feature type="site" description="Cleavage; by chymosin/rennin" evidence="1">
    <location>
        <begin position="58"/>
        <end position="59"/>
    </location>
</feature>
<feature type="modified residue" description="Phosphoserine; alternate" evidence="2">
    <location>
        <position position="102"/>
    </location>
</feature>
<feature type="modified residue" description="Phosphoserine" evidence="3">
    <location>
        <position position="119"/>
    </location>
</feature>
<feature type="glycosylation site" description="O-linked (GalNAc...) threonine" evidence="2">
    <location>
        <position position="74"/>
    </location>
</feature>
<feature type="glycosylation site" description="O-linked (GalNAc...) threonine" evidence="2">
    <location>
        <position position="84"/>
    </location>
</feature>
<feature type="glycosylation site" description="O-linked (GalNAc...) threonine" evidence="2">
    <location>
        <position position="86"/>
    </location>
</feature>
<feature type="glycosylation site" description="O-linked (GalNAc...) threonine" evidence="2">
    <location>
        <position position="89"/>
    </location>
</feature>
<feature type="glycosylation site" description="O-linked (GalNAc...) threonine" evidence="2">
    <location>
        <position position="95"/>
    </location>
</feature>
<feature type="glycosylation site" description="O-linked (GalNAc...) serine; alternate" evidence="2">
    <location>
        <position position="102"/>
    </location>
</feature>
<feature type="glycosylation site" description="O-linked (GalNAc...) threonine" evidence="2">
    <location>
        <position position="118"/>
    </location>
</feature>
<feature type="non-terminal residue">
    <location>
        <position position="1"/>
    </location>
</feature>
<comment type="function">
    <text>Kappa-casein stabilizes micelle formation, preventing casein precipitation in milk.</text>
</comment>
<comment type="subcellular location">
    <subcellularLocation>
        <location>Secreted</location>
    </subcellularLocation>
</comment>
<comment type="tissue specificity">
    <text>Mammary gland specific. Secreted in milk.</text>
</comment>
<comment type="similarity">
    <text evidence="5">Belongs to the kappa-casein family.</text>
</comment>
<keyword id="KW-0325">Glycoprotein</keyword>
<keyword id="KW-0494">Milk protein</keyword>
<keyword id="KW-0597">Phosphoprotein</keyword>
<keyword id="KW-0964">Secreted</keyword>
<proteinExistence type="evidence at transcript level"/>
<protein>
    <recommendedName>
        <fullName>Kappa-casein</fullName>
    </recommendedName>
</protein>
<evidence type="ECO:0000250" key="1"/>
<evidence type="ECO:0000250" key="2">
    <source>
        <dbReference type="UniProtKB" id="P02668"/>
    </source>
</evidence>
<evidence type="ECO:0000250" key="3">
    <source>
        <dbReference type="UniProtKB" id="P02670"/>
    </source>
</evidence>
<evidence type="ECO:0000256" key="4">
    <source>
        <dbReference type="SAM" id="MobiDB-lite"/>
    </source>
</evidence>
<evidence type="ECO:0000305" key="5"/>
<sequence>VALINNQLLPYPYYAKPGAVRSPAQILQWQVLPNTVPAKSCQAQPTTMARHPHPRLSFMAIPPKKNQDKTDIPTTNTIATVESTITPTTEAIEDTVAALEASSEVTESAPETNTDQVTSTVVE</sequence>
<organism>
    <name type="scientific">Capreolus capreolus</name>
    <name type="common">European roe deer</name>
    <name type="synonym">Cervus capreolus</name>
    <dbReference type="NCBI Taxonomy" id="9858"/>
    <lineage>
        <taxon>Eukaryota</taxon>
        <taxon>Metazoa</taxon>
        <taxon>Chordata</taxon>
        <taxon>Craniata</taxon>
        <taxon>Vertebrata</taxon>
        <taxon>Euteleostomi</taxon>
        <taxon>Mammalia</taxon>
        <taxon>Eutheria</taxon>
        <taxon>Laurasiatheria</taxon>
        <taxon>Artiodactyla</taxon>
        <taxon>Ruminantia</taxon>
        <taxon>Pecora</taxon>
        <taxon>Cervidae</taxon>
        <taxon>Odocoileinae</taxon>
        <taxon>Capreolus</taxon>
    </lineage>
</organism>
<name>CASK_CAPCA</name>
<accession>Q95146</accession>
<dbReference type="EMBL" id="U37363">
    <property type="protein sequence ID" value="AAC48643.1"/>
    <property type="molecule type" value="Genomic_DNA"/>
</dbReference>
<dbReference type="GlyCosmos" id="Q95146">
    <property type="glycosylation" value="7 sites, No reported glycans"/>
</dbReference>
<dbReference type="GO" id="GO:0005615">
    <property type="term" value="C:extracellular space"/>
    <property type="evidence" value="ECO:0007669"/>
    <property type="project" value="TreeGrafter"/>
</dbReference>
<dbReference type="GO" id="GO:0007595">
    <property type="term" value="P:lactation"/>
    <property type="evidence" value="ECO:0007669"/>
    <property type="project" value="TreeGrafter"/>
</dbReference>
<dbReference type="GO" id="GO:0050821">
    <property type="term" value="P:protein stabilization"/>
    <property type="evidence" value="ECO:0007669"/>
    <property type="project" value="TreeGrafter"/>
</dbReference>
<dbReference type="InterPro" id="IPR000117">
    <property type="entry name" value="Casein_kappa"/>
</dbReference>
<dbReference type="PANTHER" id="PTHR11470">
    <property type="entry name" value="KAPPA CASEIN"/>
    <property type="match status" value="1"/>
</dbReference>
<dbReference type="PANTHER" id="PTHR11470:SF2">
    <property type="entry name" value="KAPPA-CASEIN"/>
    <property type="match status" value="1"/>
</dbReference>
<dbReference type="Pfam" id="PF00997">
    <property type="entry name" value="Casein_kappa"/>
    <property type="match status" value="1"/>
</dbReference>
<reference key="1">
    <citation type="journal article" date="1996" name="Mol. Phylogenet. Evol.">
        <title>K-casein gene phylogeny of higher ruminants (Pecora, Artiodactyla).</title>
        <authorList>
            <person name="Cronin M.A."/>
            <person name="Stuart R."/>
            <person name="Pierson B.J."/>
            <person name="Patton J.C."/>
        </authorList>
    </citation>
    <scope>NUCLEOTIDE SEQUENCE [GENOMIC DNA]</scope>
</reference>
<gene>
    <name type="primary">CSN3</name>
    <name type="synonym">CSN10</name>
    <name type="synonym">CSNK</name>
</gene>